<organism>
    <name type="scientific">Homo sapiens</name>
    <name type="common">Human</name>
    <dbReference type="NCBI Taxonomy" id="9606"/>
    <lineage>
        <taxon>Eukaryota</taxon>
        <taxon>Metazoa</taxon>
        <taxon>Chordata</taxon>
        <taxon>Craniata</taxon>
        <taxon>Vertebrata</taxon>
        <taxon>Euteleostomi</taxon>
        <taxon>Mammalia</taxon>
        <taxon>Eutheria</taxon>
        <taxon>Euarchontoglires</taxon>
        <taxon>Primates</taxon>
        <taxon>Haplorrhini</taxon>
        <taxon>Catarrhini</taxon>
        <taxon>Hominidae</taxon>
        <taxon>Homo</taxon>
    </lineage>
</organism>
<accession>P15313</accession>
<accession>Q53FY0</accession>
<accession>Q6P4H6</accession>
<sequence>MAMEIDSRPGGLPGSSCNLGAAREHMQAVTRNYITHPRVTYRTVCSVNGPLVVLDRVKFAQYAEIVHFTLPDGTQRSGQVLEVAGTKAIVQVFEGTSGIDARKTTCEFTGDILRTPVSEDMLGRVFNGSGKPIDKGPVVMAEDFLDINGQPINPHSRIYPEEMIQTGISPIDVMNSIARGQKIPIFSAAGLPHNEIAAQICRQAGLVKKSKAVLDYHDDNFAIVFAAMGVNMETARFFKSDFEQNGTMGNVCLFLNLANDPTIERIITPRLALTTAEFLAYQCEKHVLVILTDMSSYAEALREVSAAREEVPGRRGFPGYMYTDLATIYERAGRVEGRGGSITQIPILTMPNDDITHPIPDLTGFITEGQIYVDRQLHNRQIYPPINVLPSLSRLMKSAIGEGMTRKDHGDVSNQLYACYAIGKDVQAMKAVVGEEALTSEDLLYLEFLQKFEKNFINQGPYENRSVFESLDLGWKLLRIFPKEMLKRIPQAVIDEFYSREGALQDLAPDTAL</sequence>
<dbReference type="EMBL" id="M25809">
    <property type="protein sequence ID" value="AAA36498.1"/>
    <property type="status" value="ALT_INIT"/>
    <property type="molecule type" value="mRNA"/>
</dbReference>
<dbReference type="EMBL" id="AK291121">
    <property type="protein sequence ID" value="BAF83810.1"/>
    <property type="molecule type" value="mRNA"/>
</dbReference>
<dbReference type="EMBL" id="AK313194">
    <property type="protein sequence ID" value="BAG36011.1"/>
    <property type="molecule type" value="mRNA"/>
</dbReference>
<dbReference type="EMBL" id="AK223151">
    <property type="protein sequence ID" value="BAD96871.1"/>
    <property type="molecule type" value="mRNA"/>
</dbReference>
<dbReference type="EMBL" id="CH471053">
    <property type="protein sequence ID" value="EAW99790.1"/>
    <property type="molecule type" value="Genomic_DNA"/>
</dbReference>
<dbReference type="EMBL" id="BC063411">
    <property type="protein sequence ID" value="AAH63411.1"/>
    <property type="molecule type" value="mRNA"/>
</dbReference>
<dbReference type="CCDS" id="CCDS1912.1"/>
<dbReference type="PIR" id="A33281">
    <property type="entry name" value="A33281"/>
</dbReference>
<dbReference type="RefSeq" id="NP_001683.2">
    <property type="nucleotide sequence ID" value="NM_001692.3"/>
</dbReference>
<dbReference type="SMR" id="P15313"/>
<dbReference type="BioGRID" id="107008">
    <property type="interactions" value="114"/>
</dbReference>
<dbReference type="ComplexPortal" id="CPX-2470">
    <property type="entry name" value="Vacuolar proton translocating ATPase complex, ATP6V0A1 variant"/>
</dbReference>
<dbReference type="ComplexPortal" id="CPX-6904">
    <property type="entry name" value="Vacuolar proton translocating ATPase complex, ATP6V0A2 variant"/>
</dbReference>
<dbReference type="ComplexPortal" id="CPX-6905">
    <property type="entry name" value="Vacuolar proton translocating ATPase complex, ATP6V0A3 variant"/>
</dbReference>
<dbReference type="ComplexPortal" id="CPX-6912">
    <property type="entry name" value="Vacuolar proton translocating ATPase complex, ATP6V0A4 variant"/>
</dbReference>
<dbReference type="FunCoup" id="P15313">
    <property type="interactions" value="554"/>
</dbReference>
<dbReference type="IntAct" id="P15313">
    <property type="interactions" value="38"/>
</dbReference>
<dbReference type="MINT" id="P15313"/>
<dbReference type="STRING" id="9606.ENSP00000234396"/>
<dbReference type="BindingDB" id="P15313"/>
<dbReference type="ChEMBL" id="CHEMBL3217"/>
<dbReference type="DrugBank" id="DB01133">
    <property type="generic name" value="Tiludronic acid"/>
</dbReference>
<dbReference type="TCDB" id="3.A.2.2.4">
    <property type="family name" value="the h+- or na+-translocating f-type, v-type and a-type atpase (f-atpase) superfamily"/>
</dbReference>
<dbReference type="iPTMnet" id="P15313"/>
<dbReference type="MetOSite" id="P15313"/>
<dbReference type="PhosphoSitePlus" id="P15313"/>
<dbReference type="BioMuta" id="ATP6V1B1"/>
<dbReference type="DMDM" id="215274116"/>
<dbReference type="jPOST" id="P15313"/>
<dbReference type="MassIVE" id="P15313"/>
<dbReference type="PaxDb" id="9606-ENSP00000234396"/>
<dbReference type="PeptideAtlas" id="P15313"/>
<dbReference type="ProteomicsDB" id="53129"/>
<dbReference type="Pumba" id="P15313"/>
<dbReference type="Antibodypedia" id="4020">
    <property type="antibodies" value="380 antibodies from 30 providers"/>
</dbReference>
<dbReference type="DNASU" id="525"/>
<dbReference type="Ensembl" id="ENST00000234396.10">
    <property type="protein sequence ID" value="ENSP00000234396.4"/>
    <property type="gene ID" value="ENSG00000116039.13"/>
</dbReference>
<dbReference type="GeneID" id="525"/>
<dbReference type="KEGG" id="hsa:525"/>
<dbReference type="MANE-Select" id="ENST00000234396.10">
    <property type="protein sequence ID" value="ENSP00000234396.4"/>
    <property type="RefSeq nucleotide sequence ID" value="NM_001692.4"/>
    <property type="RefSeq protein sequence ID" value="NP_001683.2"/>
</dbReference>
<dbReference type="UCSC" id="uc002shj.4">
    <property type="organism name" value="human"/>
</dbReference>
<dbReference type="AGR" id="HGNC:853"/>
<dbReference type="CTD" id="525"/>
<dbReference type="DisGeNET" id="525"/>
<dbReference type="GeneCards" id="ATP6V1B1"/>
<dbReference type="GeneReviews" id="ATP6V1B1"/>
<dbReference type="HGNC" id="HGNC:853">
    <property type="gene designation" value="ATP6V1B1"/>
</dbReference>
<dbReference type="HPA" id="ENSG00000116039">
    <property type="expression patterns" value="Group enriched (kidney, salivary gland)"/>
</dbReference>
<dbReference type="MalaCards" id="ATP6V1B1"/>
<dbReference type="MIM" id="192132">
    <property type="type" value="gene"/>
</dbReference>
<dbReference type="MIM" id="267300">
    <property type="type" value="phenotype"/>
</dbReference>
<dbReference type="neXtProt" id="NX_P15313"/>
<dbReference type="OpenTargets" id="ENSG00000116039"/>
<dbReference type="Orphanet" id="402041">
    <property type="disease" value="Autosomal recessive distal renal tubular acidosis"/>
</dbReference>
<dbReference type="PharmGKB" id="PA25154"/>
<dbReference type="VEuPathDB" id="HostDB:ENSG00000116039"/>
<dbReference type="eggNOG" id="KOG1351">
    <property type="taxonomic scope" value="Eukaryota"/>
</dbReference>
<dbReference type="GeneTree" id="ENSGT00940000161413"/>
<dbReference type="HOGENOM" id="CLU_022916_3_0_1"/>
<dbReference type="InParanoid" id="P15313"/>
<dbReference type="OMA" id="YPRNYIR"/>
<dbReference type="OrthoDB" id="1735853at2759"/>
<dbReference type="PAN-GO" id="P15313">
    <property type="GO annotations" value="3 GO annotations based on evolutionary models"/>
</dbReference>
<dbReference type="PhylomeDB" id="P15313"/>
<dbReference type="TreeFam" id="TF300313"/>
<dbReference type="BioCyc" id="MetaCyc:HS03975-MONOMER"/>
<dbReference type="PathwayCommons" id="P15313"/>
<dbReference type="Reactome" id="R-HSA-1222556">
    <property type="pathway name" value="ROS and RNS production in phagocytes"/>
</dbReference>
<dbReference type="Reactome" id="R-HSA-77387">
    <property type="pathway name" value="Insulin receptor recycling"/>
</dbReference>
<dbReference type="Reactome" id="R-HSA-917977">
    <property type="pathway name" value="Transferrin endocytosis and recycling"/>
</dbReference>
<dbReference type="Reactome" id="R-HSA-9639288">
    <property type="pathway name" value="Amino acids regulate mTORC1"/>
</dbReference>
<dbReference type="Reactome" id="R-HSA-983712">
    <property type="pathway name" value="Ion channel transport"/>
</dbReference>
<dbReference type="SignaLink" id="P15313"/>
<dbReference type="SIGNOR" id="P15313"/>
<dbReference type="BioGRID-ORCS" id="525">
    <property type="hits" value="8 hits in 1152 CRISPR screens"/>
</dbReference>
<dbReference type="GeneWiki" id="ATP6V1B1"/>
<dbReference type="GenomeRNAi" id="525"/>
<dbReference type="Pharos" id="P15313">
    <property type="development level" value="Tchem"/>
</dbReference>
<dbReference type="PRO" id="PR:P15313"/>
<dbReference type="Proteomes" id="UP000005640">
    <property type="component" value="Chromosome 2"/>
</dbReference>
<dbReference type="RNAct" id="P15313">
    <property type="molecule type" value="protein"/>
</dbReference>
<dbReference type="Bgee" id="ENSG00000116039">
    <property type="expression patterns" value="Expressed in right uterine tube and 97 other cell types or tissues"/>
</dbReference>
<dbReference type="ExpressionAtlas" id="P15313">
    <property type="expression patterns" value="baseline and differential"/>
</dbReference>
<dbReference type="GO" id="GO:0016324">
    <property type="term" value="C:apical plasma membrane"/>
    <property type="evidence" value="ECO:0000314"/>
    <property type="project" value="UniProtKB"/>
</dbReference>
<dbReference type="GO" id="GO:0016323">
    <property type="term" value="C:basolateral plasma membrane"/>
    <property type="evidence" value="ECO:0000250"/>
    <property type="project" value="UniProtKB"/>
</dbReference>
<dbReference type="GO" id="GO:0005737">
    <property type="term" value="C:cytoplasm"/>
    <property type="evidence" value="ECO:0000250"/>
    <property type="project" value="UniProtKB"/>
</dbReference>
<dbReference type="GO" id="GO:0005829">
    <property type="term" value="C:cytosol"/>
    <property type="evidence" value="ECO:0000304"/>
    <property type="project" value="Reactome"/>
</dbReference>
<dbReference type="GO" id="GO:0070062">
    <property type="term" value="C:extracellular exosome"/>
    <property type="evidence" value="ECO:0007005"/>
    <property type="project" value="UniProtKB"/>
</dbReference>
<dbReference type="GO" id="GO:0098850">
    <property type="term" value="C:extrinsic component of synaptic vesicle membrane"/>
    <property type="evidence" value="ECO:0007669"/>
    <property type="project" value="Ensembl"/>
</dbReference>
<dbReference type="GO" id="GO:0016328">
    <property type="term" value="C:lateral plasma membrane"/>
    <property type="evidence" value="ECO:0000250"/>
    <property type="project" value="UniProtKB"/>
</dbReference>
<dbReference type="GO" id="GO:0005902">
    <property type="term" value="C:microvillus"/>
    <property type="evidence" value="ECO:0000250"/>
    <property type="project" value="UniProtKB"/>
</dbReference>
<dbReference type="GO" id="GO:0016471">
    <property type="term" value="C:vacuolar proton-transporting V-type ATPase complex"/>
    <property type="evidence" value="ECO:0000315"/>
    <property type="project" value="HGNC-UCL"/>
</dbReference>
<dbReference type="GO" id="GO:0000221">
    <property type="term" value="C:vacuolar proton-transporting V-type ATPase, V1 domain"/>
    <property type="evidence" value="ECO:0000314"/>
    <property type="project" value="UniProtKB"/>
</dbReference>
<dbReference type="GO" id="GO:0005524">
    <property type="term" value="F:ATP binding"/>
    <property type="evidence" value="ECO:0007669"/>
    <property type="project" value="UniProtKB-KW"/>
</dbReference>
<dbReference type="GO" id="GO:0044877">
    <property type="term" value="F:protein-containing complex binding"/>
    <property type="evidence" value="ECO:0007669"/>
    <property type="project" value="Ensembl"/>
</dbReference>
<dbReference type="GO" id="GO:0015078">
    <property type="term" value="F:proton transmembrane transporter activity"/>
    <property type="evidence" value="ECO:0000250"/>
    <property type="project" value="UniProtKB"/>
</dbReference>
<dbReference type="GO" id="GO:0046961">
    <property type="term" value="F:proton-transporting ATPase activity, rotational mechanism"/>
    <property type="evidence" value="ECO:0000318"/>
    <property type="project" value="GO_Central"/>
</dbReference>
<dbReference type="GO" id="GO:0030534">
    <property type="term" value="P:adult behavior"/>
    <property type="evidence" value="ECO:0007669"/>
    <property type="project" value="Ensembl"/>
</dbReference>
<dbReference type="GO" id="GO:0046034">
    <property type="term" value="P:ATP metabolic process"/>
    <property type="evidence" value="ECO:0007669"/>
    <property type="project" value="Ensembl"/>
</dbReference>
<dbReference type="GO" id="GO:0055074">
    <property type="term" value="P:calcium ion homeostasis"/>
    <property type="evidence" value="ECO:0000315"/>
    <property type="project" value="UniProtKB"/>
</dbReference>
<dbReference type="GO" id="GO:0055064">
    <property type="term" value="P:chloride ion homeostasis"/>
    <property type="evidence" value="ECO:0007669"/>
    <property type="project" value="Ensembl"/>
</dbReference>
<dbReference type="GO" id="GO:0042472">
    <property type="term" value="P:inner ear morphogenesis"/>
    <property type="evidence" value="ECO:0000315"/>
    <property type="project" value="UniProtKB"/>
</dbReference>
<dbReference type="GO" id="GO:0042048">
    <property type="term" value="P:olfactory behavior"/>
    <property type="evidence" value="ECO:0007669"/>
    <property type="project" value="Ensembl"/>
</dbReference>
<dbReference type="GO" id="GO:0001503">
    <property type="term" value="P:ossification"/>
    <property type="evidence" value="ECO:0000315"/>
    <property type="project" value="HGNC-UCL"/>
</dbReference>
<dbReference type="GO" id="GO:0045851">
    <property type="term" value="P:pH reduction"/>
    <property type="evidence" value="ECO:0000315"/>
    <property type="project" value="UniProtKB"/>
</dbReference>
<dbReference type="GO" id="GO:0055075">
    <property type="term" value="P:potassium ion homeostasis"/>
    <property type="evidence" value="ECO:0007669"/>
    <property type="project" value="Ensembl"/>
</dbReference>
<dbReference type="GO" id="GO:0006693">
    <property type="term" value="P:prostaglandin metabolic process"/>
    <property type="evidence" value="ECO:0007669"/>
    <property type="project" value="Ensembl"/>
</dbReference>
<dbReference type="GO" id="GO:1902600">
    <property type="term" value="P:proton transmembrane transport"/>
    <property type="evidence" value="ECO:0000315"/>
    <property type="project" value="UniProtKB"/>
</dbReference>
<dbReference type="GO" id="GO:0010468">
    <property type="term" value="P:regulation of gene expression"/>
    <property type="evidence" value="ECO:0007669"/>
    <property type="project" value="Ensembl"/>
</dbReference>
<dbReference type="GO" id="GO:0016241">
    <property type="term" value="P:regulation of macroautophagy"/>
    <property type="evidence" value="ECO:0000303"/>
    <property type="project" value="ParkinsonsUK-UCL"/>
</dbReference>
<dbReference type="GO" id="GO:0006885">
    <property type="term" value="P:regulation of pH"/>
    <property type="evidence" value="ECO:0000315"/>
    <property type="project" value="HGNC-UCL"/>
</dbReference>
<dbReference type="GO" id="GO:0035812">
    <property type="term" value="P:renal sodium excretion"/>
    <property type="evidence" value="ECO:0007669"/>
    <property type="project" value="Ensembl"/>
</dbReference>
<dbReference type="GO" id="GO:0003096">
    <property type="term" value="P:renal sodium ion transport"/>
    <property type="evidence" value="ECO:0007669"/>
    <property type="project" value="Ensembl"/>
</dbReference>
<dbReference type="GO" id="GO:0097254">
    <property type="term" value="P:renal tubular secretion"/>
    <property type="evidence" value="ECO:0000315"/>
    <property type="project" value="HGNC-UCL"/>
</dbReference>
<dbReference type="GO" id="GO:0003091">
    <property type="term" value="P:renal water homeostasis"/>
    <property type="evidence" value="ECO:0007669"/>
    <property type="project" value="Ensembl"/>
</dbReference>
<dbReference type="GO" id="GO:0007605">
    <property type="term" value="P:sensory perception of sound"/>
    <property type="evidence" value="ECO:0000315"/>
    <property type="project" value="UniProtKB"/>
</dbReference>
<dbReference type="GO" id="GO:0097401">
    <property type="term" value="P:synaptic vesicle lumen acidification"/>
    <property type="evidence" value="ECO:0007669"/>
    <property type="project" value="Ensembl"/>
</dbReference>
<dbReference type="GO" id="GO:0007035">
    <property type="term" value="P:vacuolar acidification"/>
    <property type="evidence" value="ECO:0000318"/>
    <property type="project" value="GO_Central"/>
</dbReference>
<dbReference type="GO" id="GO:0070072">
    <property type="term" value="P:vacuolar proton-transporting V-type ATPase complex assembly"/>
    <property type="evidence" value="ECO:0000315"/>
    <property type="project" value="UniProtKB"/>
</dbReference>
<dbReference type="CDD" id="cd18112">
    <property type="entry name" value="ATP-synt_V_A-type_beta_C"/>
    <property type="match status" value="1"/>
</dbReference>
<dbReference type="CDD" id="cd18118">
    <property type="entry name" value="ATP-synt_V_A-type_beta_N"/>
    <property type="match status" value="1"/>
</dbReference>
<dbReference type="CDD" id="cd01135">
    <property type="entry name" value="V_A-ATPase_B"/>
    <property type="match status" value="1"/>
</dbReference>
<dbReference type="FunFam" id="3.40.50.12240:FF:000001">
    <property type="entry name" value="V-type proton ATPase subunit B, brain"/>
    <property type="match status" value="1"/>
</dbReference>
<dbReference type="Gene3D" id="3.40.50.12240">
    <property type="match status" value="1"/>
</dbReference>
<dbReference type="HAMAP" id="MF_00310">
    <property type="entry name" value="ATP_synth_B_arch"/>
    <property type="match status" value="1"/>
</dbReference>
<dbReference type="InterPro" id="IPR055190">
    <property type="entry name" value="ATP-synt_VA_C"/>
</dbReference>
<dbReference type="InterPro" id="IPR020003">
    <property type="entry name" value="ATPase_a/bsu_AS"/>
</dbReference>
<dbReference type="InterPro" id="IPR004100">
    <property type="entry name" value="ATPase_F1/V1/A1_a/bsu_N"/>
</dbReference>
<dbReference type="InterPro" id="IPR000194">
    <property type="entry name" value="ATPase_F1/V1/A1_a/bsu_nucl-bd"/>
</dbReference>
<dbReference type="InterPro" id="IPR005723">
    <property type="entry name" value="ATPase_V1-cplx_bsu"/>
</dbReference>
<dbReference type="InterPro" id="IPR027417">
    <property type="entry name" value="P-loop_NTPase"/>
</dbReference>
<dbReference type="InterPro" id="IPR022879">
    <property type="entry name" value="V-ATPase_su_B/beta"/>
</dbReference>
<dbReference type="NCBIfam" id="NF003235">
    <property type="entry name" value="PRK04196.1"/>
    <property type="match status" value="1"/>
</dbReference>
<dbReference type="NCBIfam" id="TIGR01040">
    <property type="entry name" value="V-ATPase_V1_B"/>
    <property type="match status" value="1"/>
</dbReference>
<dbReference type="PANTHER" id="PTHR43389">
    <property type="entry name" value="V-TYPE PROTON ATPASE SUBUNIT B"/>
    <property type="match status" value="1"/>
</dbReference>
<dbReference type="PANTHER" id="PTHR43389:SF1">
    <property type="entry name" value="V-TYPE PROTON ATPASE SUBUNIT B, KIDNEY ISOFORM"/>
    <property type="match status" value="1"/>
</dbReference>
<dbReference type="Pfam" id="PF00006">
    <property type="entry name" value="ATP-synt_ab"/>
    <property type="match status" value="1"/>
</dbReference>
<dbReference type="Pfam" id="PF02874">
    <property type="entry name" value="ATP-synt_ab_N"/>
    <property type="match status" value="1"/>
</dbReference>
<dbReference type="Pfam" id="PF22919">
    <property type="entry name" value="ATP-synt_VA_C"/>
    <property type="match status" value="1"/>
</dbReference>
<dbReference type="PIRSF" id="PIRSF039114">
    <property type="entry name" value="V-ATPsynth_beta/V-ATPase_B"/>
    <property type="match status" value="1"/>
</dbReference>
<dbReference type="SUPFAM" id="SSF52540">
    <property type="entry name" value="P-loop containing nucleoside triphosphate hydrolases"/>
    <property type="match status" value="1"/>
</dbReference>
<dbReference type="PROSITE" id="PS00152">
    <property type="entry name" value="ATPASE_ALPHA_BETA"/>
    <property type="match status" value="1"/>
</dbReference>
<comment type="function">
    <text evidence="2 6 12">Non-catalytic subunit of the V1 complex of vacuolar(H+)-ATPase (V-ATPase), a multisubunit enzyme composed of a peripheral complex (V1) that hydrolyzes ATP and a membrane integral complex (V0) that translocates protons (PubMed:16769747). V-ATPase is responsible for acidifying and maintaining the pH of intracellular compartments and in some cell types, is targeted to the plasma membrane, where it is responsible for acidifying the extracellular environment (PubMed:32001091). Essential for the proper assembly and activity of V-ATPase (PubMed:16769747). In renal intercalated cells, mediates secretion of protons (H+) into the urine thereby ensuring correct urinary acidification (PubMed:16769747). Required for optimal olfactory function by mediating the acidification of the nasal olfactory epithelium (By similarity).</text>
</comment>
<comment type="subunit">
    <text evidence="1 4">V-ATPase is a heteromultimeric enzyme made up of two complexes: the ATP-hydrolytic V1 complex and the proton translocation V0 complex (By similarity). The V1 complex consists of three catalytic AB heterodimers that form a heterohexamer, three peripheral stalks each consisting of EG heterodimers, one central rotor including subunits D and F, and the regulatory subunits C and H (By similarity). The proton translocation complex V0 consists of the proton transport subunit a, a ring of proteolipid subunits c9c'', rotary subunit d, subunits e and f, and the accessory subunits ATP6AP1/Ac45 and ATP6AP2/PRR (By similarity). Forms a complex with NHERF1 and SCL4A7 (PubMed:12444018).</text>
</comment>
<comment type="interaction">
    <interactant intactId="EBI-2891281">
        <id>P15313</id>
    </interactant>
    <interactant intactId="EBI-930964">
        <id>P54253</id>
        <label>ATXN1</label>
    </interactant>
    <organismsDiffer>false</organismsDiffer>
    <experiments>6</experiments>
</comment>
<comment type="interaction">
    <interactant intactId="EBI-2891281">
        <id>P15313</id>
    </interactant>
    <interactant intactId="EBI-10988864">
        <id>P46379-2</id>
        <label>BAG6</label>
    </interactant>
    <organismsDiffer>false</organismsDiffer>
    <experiments>3</experiments>
</comment>
<comment type="interaction">
    <interactant intactId="EBI-2891281">
        <id>P15313</id>
    </interactant>
    <interactant intactId="EBI-12593112">
        <id>O75190-2</id>
        <label>DNAJB6</label>
    </interactant>
    <organismsDiffer>false</organismsDiffer>
    <experiments>3</experiments>
</comment>
<comment type="interaction">
    <interactant intactId="EBI-2891281">
        <id>P15313</id>
    </interactant>
    <interactant intactId="EBI-395638">
        <id>O14645</id>
        <label>DNALI1</label>
    </interactant>
    <organismsDiffer>false</organismsDiffer>
    <experiments>3</experiments>
</comment>
<comment type="interaction">
    <interactant intactId="EBI-2891281">
        <id>P15313</id>
    </interactant>
    <interactant intactId="EBI-352682">
        <id>P04792</id>
        <label>HSPB1</label>
    </interactant>
    <organismsDiffer>false</organismsDiffer>
    <experiments>3</experiments>
</comment>
<comment type="interaction">
    <interactant intactId="EBI-2891281">
        <id>P15313</id>
    </interactant>
    <interactant intactId="EBI-10975473">
        <id>O60333-2</id>
        <label>KIF1B</label>
    </interactant>
    <organismsDiffer>false</organismsDiffer>
    <experiments>3</experiments>
</comment>
<comment type="interaction">
    <interactant intactId="EBI-2891281">
        <id>P15313</id>
    </interactant>
    <interactant intactId="EBI-948266">
        <id>O14901</id>
        <label>KLF11</label>
    </interactant>
    <organismsDiffer>false</organismsDiffer>
    <experiments>3</experiments>
</comment>
<comment type="interaction">
    <interactant intactId="EBI-2891281">
        <id>P15313</id>
    </interactant>
    <interactant intactId="EBI-396669">
        <id>Q9Y3C5</id>
        <label>RNF11</label>
    </interactant>
    <organismsDiffer>false</organismsDiffer>
    <experiments>3</experiments>
</comment>
<comment type="interaction">
    <interactant intactId="EBI-2891281">
        <id>P15313</id>
    </interactant>
    <interactant intactId="EBI-372899">
        <id>Q13148</id>
        <label>TARDBP</label>
    </interactant>
    <organismsDiffer>false</organismsDiffer>
    <experiments>6</experiments>
</comment>
<comment type="interaction">
    <interactant intactId="EBI-2891281">
        <id>P15313</id>
    </interactant>
    <interactant intactId="EBI-711909">
        <id>P02766</id>
        <label>TTR</label>
    </interactant>
    <organismsDiffer>false</organismsDiffer>
    <experiments>3</experiments>
</comment>
<comment type="interaction">
    <interactant intactId="EBI-2891281">
        <id>P15313</id>
    </interactant>
    <interactant intactId="EBI-720609">
        <id>O76024</id>
        <label>WFS1</label>
    </interactant>
    <organismsDiffer>false</organismsDiffer>
    <experiments>3</experiments>
</comment>
<comment type="subcellular location">
    <subcellularLocation>
        <location evidence="6 9">Apical cell membrane</location>
    </subcellularLocation>
    <subcellularLocation>
        <location evidence="2">Basolateral cell membrane</location>
    </subcellularLocation>
</comment>
<comment type="tissue specificity">
    <text evidence="6 9 10">Kidney; localizes to early distal nephron, encompassing thick ascending limbs and distal convoluted tubules (at protein level) (PubMed:16769747, PubMed:29993276). Expressed in the cochlea and endolymphatic sac (PubMed:9916796).</text>
</comment>
<comment type="domain">
    <text evidence="4">The PDZ-binding motif mediates interactions with NHERF1 and SCL4A7.</text>
</comment>
<comment type="disease" evidence="3 5 6 7 10">
    <disease id="DI-01495">
        <name>Renal tubular acidosis, distal, 2, with progressive sensorineural hearing loss</name>
        <acronym>DRTA2</acronym>
        <description>An autosomal recessive disease characterized by the association of renal distal tubular acidosis with sensorineural hearing loss. Distal renal tubular acidosis is characterized by reduced ability to acidify urine, variable hyperchloremic hypokalemic metabolic acidosis, nephrocalcinosis, and nephrolithiasis. It is due to functional failure of alpha-intercalated cells of the cortical collecting duct of the distal nephron, where vectorial proton transport is required for urinary acidification.</description>
        <dbReference type="MIM" id="267300"/>
    </disease>
    <text>The disease is caused by variants affecting the gene represented in this entry.</text>
</comment>
<comment type="similarity">
    <text evidence="13">Belongs to the ATPase alpha/beta chains family.</text>
</comment>
<comment type="sequence caution" evidence="13">
    <conflict type="erroneous initiation">
        <sequence resource="EMBL-CDS" id="AAA36498"/>
    </conflict>
</comment>
<proteinExistence type="evidence at protein level"/>
<feature type="chain" id="PRO_0000144624" description="V-type proton ATPase subunit B, kidney isoform">
    <location>
        <begin position="1"/>
        <end position="513"/>
    </location>
</feature>
<feature type="short sequence motif" description="PDZ-binding" evidence="4">
    <location>
        <begin position="510"/>
        <end position="513"/>
    </location>
</feature>
<feature type="binding site" evidence="1">
    <location>
        <position position="394"/>
    </location>
    <ligand>
        <name>ATP</name>
        <dbReference type="ChEBI" id="CHEBI:30616"/>
    </ligand>
</feature>
<feature type="sequence variant" id="VAR_021011" description="In dbSNP:rs17720303." evidence="3 11">
    <original>T</original>
    <variation>I</variation>
    <location>
        <position position="30"/>
    </location>
</feature>
<feature type="sequence variant" id="VAR_085740" description="In DRTA2; dbSNP:rs121964879." evidence="7">
    <location>
        <begin position="31"/>
        <end position="513"/>
    </location>
</feature>
<feature type="sequence variant" id="VAR_007866" description="In DRTA2; disruption of V-ATPase assembly resulting in loss of enzyme activity; impaired trafficking of V-ATPase to apical cell membrane; impaired renal proton secretion; dbSNP:rs121964880." evidence="3 5 6 10">
    <original>L</original>
    <variation>P</variation>
    <location>
        <position position="81"/>
    </location>
</feature>
<feature type="sequence variant" id="VAR_021012" description="In DRTA2; dbSNP:rs1343871627." evidence="3">
    <original>G</original>
    <variation>V</variation>
    <location>
        <position position="123"/>
    </location>
</feature>
<feature type="sequence variant" id="VAR_007867" description="In DRTA2; disruption of V-ATPase assembly resulting in loss of enzyme activity; impaired trafficking of V-ATPase to apical cell membrane; impaired renal proton secretion; dbSNP:rs727505222." evidence="6 10">
    <original>R</original>
    <variation>W</variation>
    <location>
        <position position="124"/>
    </location>
</feature>
<feature type="sequence variant" id="VAR_021013" description="In DRTA2; dbSNP:rs782500780." evidence="3">
    <original>R</original>
    <variation>C</variation>
    <location>
        <position position="157"/>
    </location>
</feature>
<feature type="sequence variant" id="VAR_021014" description="In dbSNP:rs114234874." evidence="3">
    <original>E</original>
    <variation>K</variation>
    <location>
        <position position="161"/>
    </location>
</feature>
<feature type="sequence variant" id="VAR_007868" description="In DRTA2; disruption of V-ATPase assembly resulting in loss of enzyme activity; impaired trafficking of V-ATPase to apical cell membrane; impaired renal proton secretion." evidence="6 10">
    <original>M</original>
    <variation>R</variation>
    <location>
        <position position="174"/>
    </location>
</feature>
<feature type="sequence variant" id="VAR_007869" description="In DRTA2; disruption of V-ATPase assembly resulting in loss of enzyme activity; impaired trafficking of V-ATPase to apical cell membrane; impaired renal proton secretion; dbSNP:rs1161604514." evidence="3 6 10">
    <original>T</original>
    <variation>P</variation>
    <location>
        <position position="275"/>
    </location>
</feature>
<feature type="sequence variant" id="VAR_007870" description="In DRTA2; disruption of V-ATPase assembly resulting in loss of enzyme activity; impaired trafficking of V-ATPase to apical cell membrane; impaired renal proton secretion; dbSNP:rs1553420413." evidence="6 10">
    <original>G</original>
    <variation>E</variation>
    <location>
        <position position="316"/>
    </location>
</feature>
<feature type="sequence variant" id="VAR_007871" description="In DRTA2; disruption of V-ATPase assembly resulting in loss of enzyme activity; impaired trafficking of V-ATPase to apical cell membrane; impaired renal proton secretion; dbSNP:rs781838938." evidence="3 5 6 10">
    <original>P</original>
    <variation>R</variation>
    <location>
        <position position="346"/>
    </location>
</feature>
<feature type="sequence variant" id="VAR_007872" description="In DRTA2; disruption of V-ATPase assembly resulting in loss of enzyme activity; impaired trafficking of V-ATPase to apical cell membrane; impaired renal proton secretion." evidence="6 10">
    <original>G</original>
    <variation>S</variation>
    <location>
        <position position="364"/>
    </location>
</feature>
<feature type="sequence variant" id="VAR_021015" description="In dbSNP:rs142905621." evidence="5 8">
    <original>R</original>
    <variation>H</variation>
    <location>
        <position position="465"/>
    </location>
</feature>
<feature type="mutagenesis site" description="Loss of interactions with NHERF1 and SCL4A7." evidence="4">
    <original>L</original>
    <variation>G</variation>
    <location>
        <position position="513"/>
    </location>
</feature>
<feature type="sequence conflict" description="In Ref. 1; AAA36498." evidence="13" ref="1">
    <original>V</original>
    <variation>M</variation>
    <location>
        <position position="467"/>
    </location>
</feature>
<feature type="sequence conflict" description="In Ref. 1; AAA36498." evidence="13" ref="1">
    <original>G</original>
    <variation>S</variation>
    <location>
        <position position="474"/>
    </location>
</feature>
<feature type="sequence conflict" description="In Ref. 1; AAA36498." evidence="13" ref="1">
    <original>A</original>
    <variation>R</variation>
    <location>
        <position position="503"/>
    </location>
</feature>
<evidence type="ECO:0000250" key="1">
    <source>
        <dbReference type="UniProtKB" id="P21281"/>
    </source>
</evidence>
<evidence type="ECO:0000250" key="2">
    <source>
        <dbReference type="UniProtKB" id="Q91YH6"/>
    </source>
</evidence>
<evidence type="ECO:0000269" key="3">
    <source>
    </source>
</evidence>
<evidence type="ECO:0000269" key="4">
    <source>
    </source>
</evidence>
<evidence type="ECO:0000269" key="5">
    <source>
    </source>
</evidence>
<evidence type="ECO:0000269" key="6">
    <source>
    </source>
</evidence>
<evidence type="ECO:0000269" key="7">
    <source>
    </source>
</evidence>
<evidence type="ECO:0000269" key="8">
    <source>
    </source>
</evidence>
<evidence type="ECO:0000269" key="9">
    <source>
    </source>
</evidence>
<evidence type="ECO:0000269" key="10">
    <source>
    </source>
</evidence>
<evidence type="ECO:0000269" key="11">
    <source ref="3"/>
</evidence>
<evidence type="ECO:0000303" key="12">
    <source>
    </source>
</evidence>
<evidence type="ECO:0000305" key="13"/>
<name>VATB1_HUMAN</name>
<protein>
    <recommendedName>
        <fullName>V-type proton ATPase subunit B, kidney isoform</fullName>
        <shortName>V-ATPase subunit B 1</shortName>
    </recommendedName>
    <alternativeName>
        <fullName>Endomembrane proton pump 58 kDa subunit</fullName>
    </alternativeName>
    <alternativeName>
        <fullName>Vacuolar proton pump subunit B 1</fullName>
    </alternativeName>
</protein>
<gene>
    <name type="primary">ATP6V1B1</name>
    <name type="synonym">ATP6B1</name>
    <name type="synonym">VATB</name>
    <name type="synonym">VPP3</name>
</gene>
<reference key="1">
    <citation type="journal article" date="1989" name="Proc. Natl. Acad. Sci. U.S.A.">
        <title>Human endomembrane H+ pump strongly resembles the ATP-synthetase of Archaebacteria.</title>
        <authorList>
            <person name="Suedhof T.C."/>
            <person name="Fried V.A."/>
            <person name="Stone D.K."/>
            <person name="Johnston P.A."/>
            <person name="Xie X.-S."/>
        </authorList>
    </citation>
    <scope>NUCLEOTIDE SEQUENCE [MRNA]</scope>
    <source>
        <tissue>Kidney</tissue>
    </source>
</reference>
<reference key="2">
    <citation type="journal article" date="2004" name="Nat. Genet.">
        <title>Complete sequencing and characterization of 21,243 full-length human cDNAs.</title>
        <authorList>
            <person name="Ota T."/>
            <person name="Suzuki Y."/>
            <person name="Nishikawa T."/>
            <person name="Otsuki T."/>
            <person name="Sugiyama T."/>
            <person name="Irie R."/>
            <person name="Wakamatsu A."/>
            <person name="Hayashi K."/>
            <person name="Sato H."/>
            <person name="Nagai K."/>
            <person name="Kimura K."/>
            <person name="Makita H."/>
            <person name="Sekine M."/>
            <person name="Obayashi M."/>
            <person name="Nishi T."/>
            <person name="Shibahara T."/>
            <person name="Tanaka T."/>
            <person name="Ishii S."/>
            <person name="Yamamoto J."/>
            <person name="Saito K."/>
            <person name="Kawai Y."/>
            <person name="Isono Y."/>
            <person name="Nakamura Y."/>
            <person name="Nagahari K."/>
            <person name="Murakami K."/>
            <person name="Yasuda T."/>
            <person name="Iwayanagi T."/>
            <person name="Wagatsuma M."/>
            <person name="Shiratori A."/>
            <person name="Sudo H."/>
            <person name="Hosoiri T."/>
            <person name="Kaku Y."/>
            <person name="Kodaira H."/>
            <person name="Kondo H."/>
            <person name="Sugawara M."/>
            <person name="Takahashi M."/>
            <person name="Kanda K."/>
            <person name="Yokoi T."/>
            <person name="Furuya T."/>
            <person name="Kikkawa E."/>
            <person name="Omura Y."/>
            <person name="Abe K."/>
            <person name="Kamihara K."/>
            <person name="Katsuta N."/>
            <person name="Sato K."/>
            <person name="Tanikawa M."/>
            <person name="Yamazaki M."/>
            <person name="Ninomiya K."/>
            <person name="Ishibashi T."/>
            <person name="Yamashita H."/>
            <person name="Murakawa K."/>
            <person name="Fujimori K."/>
            <person name="Tanai H."/>
            <person name="Kimata M."/>
            <person name="Watanabe M."/>
            <person name="Hiraoka S."/>
            <person name="Chiba Y."/>
            <person name="Ishida S."/>
            <person name="Ono Y."/>
            <person name="Takiguchi S."/>
            <person name="Watanabe S."/>
            <person name="Yosida M."/>
            <person name="Hotuta T."/>
            <person name="Kusano J."/>
            <person name="Kanehori K."/>
            <person name="Takahashi-Fujii A."/>
            <person name="Hara H."/>
            <person name="Tanase T.-O."/>
            <person name="Nomura Y."/>
            <person name="Togiya S."/>
            <person name="Komai F."/>
            <person name="Hara R."/>
            <person name="Takeuchi K."/>
            <person name="Arita M."/>
            <person name="Imose N."/>
            <person name="Musashino K."/>
            <person name="Yuuki H."/>
            <person name="Oshima A."/>
            <person name="Sasaki N."/>
            <person name="Aotsuka S."/>
            <person name="Yoshikawa Y."/>
            <person name="Matsunawa H."/>
            <person name="Ichihara T."/>
            <person name="Shiohata N."/>
            <person name="Sano S."/>
            <person name="Moriya S."/>
            <person name="Momiyama H."/>
            <person name="Satoh N."/>
            <person name="Takami S."/>
            <person name="Terashima Y."/>
            <person name="Suzuki O."/>
            <person name="Nakagawa S."/>
            <person name="Senoh A."/>
            <person name="Mizoguchi H."/>
            <person name="Goto Y."/>
            <person name="Shimizu F."/>
            <person name="Wakebe H."/>
            <person name="Hishigaki H."/>
            <person name="Watanabe T."/>
            <person name="Sugiyama A."/>
            <person name="Takemoto M."/>
            <person name="Kawakami B."/>
            <person name="Yamazaki M."/>
            <person name="Watanabe K."/>
            <person name="Kumagai A."/>
            <person name="Itakura S."/>
            <person name="Fukuzumi Y."/>
            <person name="Fujimori Y."/>
            <person name="Komiyama M."/>
            <person name="Tashiro H."/>
            <person name="Tanigami A."/>
            <person name="Fujiwara T."/>
            <person name="Ono T."/>
            <person name="Yamada K."/>
            <person name="Fujii Y."/>
            <person name="Ozaki K."/>
            <person name="Hirao M."/>
            <person name="Ohmori Y."/>
            <person name="Kawabata A."/>
            <person name="Hikiji T."/>
            <person name="Kobatake N."/>
            <person name="Inagaki H."/>
            <person name="Ikema Y."/>
            <person name="Okamoto S."/>
            <person name="Okitani R."/>
            <person name="Kawakami T."/>
            <person name="Noguchi S."/>
            <person name="Itoh T."/>
            <person name="Shigeta K."/>
            <person name="Senba T."/>
            <person name="Matsumura K."/>
            <person name="Nakajima Y."/>
            <person name="Mizuno T."/>
            <person name="Morinaga M."/>
            <person name="Sasaki M."/>
            <person name="Togashi T."/>
            <person name="Oyama M."/>
            <person name="Hata H."/>
            <person name="Watanabe M."/>
            <person name="Komatsu T."/>
            <person name="Mizushima-Sugano J."/>
            <person name="Satoh T."/>
            <person name="Shirai Y."/>
            <person name="Takahashi Y."/>
            <person name="Nakagawa K."/>
            <person name="Okumura K."/>
            <person name="Nagase T."/>
            <person name="Nomura N."/>
            <person name="Kikuchi H."/>
            <person name="Masuho Y."/>
            <person name="Yamashita R."/>
            <person name="Nakai K."/>
            <person name="Yada T."/>
            <person name="Nakamura Y."/>
            <person name="Ohara O."/>
            <person name="Isogai T."/>
            <person name="Sugano S."/>
        </authorList>
    </citation>
    <scope>NUCLEOTIDE SEQUENCE [LARGE SCALE MRNA]</scope>
</reference>
<reference key="3">
    <citation type="submission" date="2005-04" db="EMBL/GenBank/DDBJ databases">
        <authorList>
            <person name="Suzuki Y."/>
            <person name="Sugano S."/>
            <person name="Totoki Y."/>
            <person name="Toyoda A."/>
            <person name="Takeda T."/>
            <person name="Sakaki Y."/>
            <person name="Tanaka A."/>
            <person name="Yokoyama S."/>
        </authorList>
    </citation>
    <scope>NUCLEOTIDE SEQUENCE [LARGE SCALE MRNA]</scope>
    <scope>VARIANT ILE-30</scope>
    <source>
        <tissue>Kidney</tissue>
    </source>
</reference>
<reference key="4">
    <citation type="submission" date="2005-09" db="EMBL/GenBank/DDBJ databases">
        <authorList>
            <person name="Mural R.J."/>
            <person name="Istrail S."/>
            <person name="Sutton G.G."/>
            <person name="Florea L."/>
            <person name="Halpern A.L."/>
            <person name="Mobarry C.M."/>
            <person name="Lippert R."/>
            <person name="Walenz B."/>
            <person name="Shatkay H."/>
            <person name="Dew I."/>
            <person name="Miller J.R."/>
            <person name="Flanigan M.J."/>
            <person name="Edwards N.J."/>
            <person name="Bolanos R."/>
            <person name="Fasulo D."/>
            <person name="Halldorsson B.V."/>
            <person name="Hannenhalli S."/>
            <person name="Turner R."/>
            <person name="Yooseph S."/>
            <person name="Lu F."/>
            <person name="Nusskern D.R."/>
            <person name="Shue B."/>
            <person name="Zheng X.H."/>
            <person name="Zhong F."/>
            <person name="Delcher A.L."/>
            <person name="Huson D.H."/>
            <person name="Kravitz S.A."/>
            <person name="Mouchard L."/>
            <person name="Reinert K."/>
            <person name="Remington K.A."/>
            <person name="Clark A.G."/>
            <person name="Waterman M.S."/>
            <person name="Eichler E.E."/>
            <person name="Adams M.D."/>
            <person name="Hunkapiller M.W."/>
            <person name="Myers E.W."/>
            <person name="Venter J.C."/>
        </authorList>
    </citation>
    <scope>NUCLEOTIDE SEQUENCE [LARGE SCALE GENOMIC DNA]</scope>
</reference>
<reference key="5">
    <citation type="journal article" date="2004" name="Genome Res.">
        <title>The status, quality, and expansion of the NIH full-length cDNA project: the Mammalian Gene Collection (MGC).</title>
        <authorList>
            <consortium name="The MGC Project Team"/>
        </authorList>
    </citation>
    <scope>NUCLEOTIDE SEQUENCE [LARGE SCALE MRNA]</scope>
    <source>
        <tissue>Lung</tissue>
    </source>
</reference>
<reference key="6">
    <citation type="journal article" date="2003" name="Am. J. Physiol.">
        <title>The COOH termini of NBC3 and the 56-kDa H+-ATPase subunit are PDZ motifs involved in their interaction.</title>
        <authorList>
            <person name="Pushkin A."/>
            <person name="Abuladze N."/>
            <person name="Newman D."/>
            <person name="Muronets V."/>
            <person name="Sassani P."/>
            <person name="Tatishchev S."/>
            <person name="Kurtz I."/>
        </authorList>
    </citation>
    <scope>INTERACTION WITH NHERF1 AND SLC4A7</scope>
    <scope>DOMAIN</scope>
    <scope>MUTAGENESIS OF LEU-513</scope>
</reference>
<reference key="7">
    <citation type="journal article" date="2018" name="Am. J. Physiol.">
        <title>H+-ATPase B1 subunit localizes to thick ascending limb and distal convoluted tubule of rodent and human kidney.</title>
        <authorList>
            <person name="Frische S."/>
            <person name="Chambrey R."/>
            <person name="Trepiccione F."/>
            <person name="Zamani R."/>
            <person name="Marcussen N."/>
            <person name="Alexander R.T."/>
            <person name="Skjoedt K."/>
            <person name="Svenningsen P."/>
            <person name="Dimke H."/>
        </authorList>
    </citation>
    <scope>SUBCELLULAR LOCATION</scope>
    <scope>TISSUE SPECIFICITY</scope>
</reference>
<reference key="8">
    <citation type="journal article" date="2020" name="Trends Biochem. Sci.">
        <title>Structure and Roles of V-type ATPases.</title>
        <authorList>
            <person name="Vasanthakumar T."/>
            <person name="Rubinstein J.L."/>
        </authorList>
    </citation>
    <scope>REVIEW</scope>
</reference>
<reference key="9">
    <citation type="journal article" date="1999" name="Nat. Genet.">
        <title>Mutations in the gene encoding B1 subunit of H+-ATPase cause renal tubular acidosis with sensorineural deafness.</title>
        <authorList>
            <person name="Karet F.E."/>
            <person name="Finberg K.E."/>
            <person name="Nelson R.D."/>
            <person name="Nayir A."/>
            <person name="Mocan H."/>
            <person name="Sanjad S.A."/>
            <person name="Rodriguez-Soriano J."/>
            <person name="Santos F."/>
            <person name="Cremers C.W.R.J."/>
            <person name="Di Pietro A."/>
            <person name="Hoffbrand B.I."/>
            <person name="Winiarski J."/>
            <person name="Bakkaloglu A."/>
            <person name="Ozen S."/>
            <person name="Dusunsel R."/>
            <person name="Goodyer P."/>
            <person name="Hulton S.A."/>
            <person name="Wu D.K."/>
            <person name="Skvorak A.B."/>
            <person name="Morton C.C."/>
            <person name="Cunningham M.J."/>
            <person name="Jha V."/>
            <person name="Lifton R.P."/>
        </authorList>
    </citation>
    <scope>VARIANTS DRTA2 PRO-81; TRP-124; ARG-174; PRO-275; GLU-316; ARG-346 AND SER-364</scope>
    <scope>TISSUE SPECIFICITY</scope>
</reference>
<reference key="10">
    <citation type="journal article" date="2002" name="J. Med. Genet.">
        <title>Novel ATP6V1B1 and ATP6V0A4 mutations in autosomal recessive distal renal tubular acidosis with new evidence for hearing loss.</title>
        <authorList>
            <person name="Stover E.H."/>
            <person name="Borthwick K.J."/>
            <person name="Bavalia C."/>
            <person name="Eady N."/>
            <person name="Fritz D.M."/>
            <person name="Rungroj N."/>
            <person name="Giersch A.B.S."/>
            <person name="Morton C.C."/>
            <person name="Axon P.R."/>
            <person name="Akil I."/>
            <person name="Al-Sabban E.A."/>
            <person name="Baguley D.M."/>
            <person name="Bianca S."/>
            <person name="Bakkaloglu A."/>
            <person name="Bircan Z."/>
            <person name="Chauveau D."/>
            <person name="Clermont M.-J."/>
            <person name="Guala A."/>
            <person name="Hulton S.A."/>
            <person name="Kroes H."/>
            <person name="Li Volti G."/>
            <person name="Mir S."/>
            <person name="Mocan H."/>
            <person name="Nayir A."/>
            <person name="Ozen S."/>
            <person name="Rodriguez Soriano J."/>
            <person name="Sanjad S.A."/>
            <person name="Tasic V."/>
            <person name="Taylor C.M."/>
            <person name="Topaloglu R."/>
            <person name="Smith A.N."/>
            <person name="Karet F.E."/>
        </authorList>
    </citation>
    <scope>VARIANTS DRTA2 PRO-81; VAL-123; CYS-157; PRO-275 AND ARG-346</scope>
    <scope>VARIANTS ILE-30 AND LYS-161</scope>
</reference>
<reference key="11">
    <citation type="journal article" date="2003" name="Pediatr. Nephrol.">
        <title>Confirmation of the ATP6B1 gene as responsible for distal renal tubular acidosis.</title>
        <authorList>
            <person name="Ruf R."/>
            <person name="Rensing C."/>
            <person name="Topaloglu R."/>
            <person name="Guay-Woodford L."/>
            <person name="Klein C."/>
            <person name="Vollmer M."/>
            <person name="Otto E."/>
            <person name="Beekmann F."/>
            <person name="Haller M."/>
            <person name="Wiedensohler A."/>
            <person name="Leumann E."/>
            <person name="Antignac C."/>
            <person name="Rizzoni G."/>
            <person name="Filler G."/>
            <person name="Brandis M."/>
            <person name="Weber J.L."/>
            <person name="Hildebrandt F."/>
        </authorList>
    </citation>
    <scope>VARIANT HIS-465</scope>
    <scope>VARIANTS DRTA2 PRO-81 AND ARG-346</scope>
</reference>
<reference key="12">
    <citation type="journal article" date="2006" name="J. Am. Soc. Nephrol.">
        <title>Vacuolar H+ -ATPase B1 subunit mutations that cause inherited distal renal tubular acidosis affect proton pump assembly and trafficking in inner medullary collecting duct cells.</title>
        <authorList>
            <person name="Yang Q."/>
            <person name="Li G."/>
            <person name="Singh S.K."/>
            <person name="Alexander E.A."/>
            <person name="Schwartz J.H."/>
        </authorList>
    </citation>
    <scope>CHARACTERIZATION OF VARIANTS DRTA2 PRO-81; TRP-124; ARG-174; PRO-275; GLU-316; ARG-346 AND SER-364</scope>
    <scope>FUNCTION</scope>
    <scope>SUBCELLULAR LOCATION</scope>
</reference>
<reference key="13">
    <citation type="journal article" date="2009" name="Indian Pediatr.">
        <title>Genetic studies in a family with distal renal tubular acidosis and sensorineural deafness.</title>
        <authorList>
            <person name="Sethi S.K."/>
            <person name="Singh N."/>
            <person name="Gil H."/>
            <person name="Bagga A."/>
        </authorList>
    </citation>
    <scope>VARIANT DRTA2 31-ARG--LEU-513 DEL</scope>
</reference>
<reference key="14">
    <citation type="journal article" date="2016" name="Nature">
        <title>Analysis of protein-coding genetic variation in 60,706 humans.</title>
        <authorList>
            <consortium name="Exome Aggregation Consortium"/>
            <person name="Lek M."/>
            <person name="Karczewski K.J."/>
            <person name="Minikel E.V."/>
            <person name="Samocha K.E."/>
            <person name="Banks E."/>
            <person name="Fennell T."/>
            <person name="O'Donnell-Luria A.H."/>
            <person name="Ware J.S."/>
            <person name="Hill A.J."/>
            <person name="Cummings B.B."/>
            <person name="Tukiainen T."/>
            <person name="Birnbaum D.P."/>
            <person name="Kosmicki J.A."/>
            <person name="Duncan L.E."/>
            <person name="Estrada K."/>
            <person name="Zhao F."/>
            <person name="Zou J."/>
            <person name="Pierce-Hoffman E."/>
            <person name="Berghout J."/>
            <person name="Cooper D.N."/>
            <person name="Deflaux N."/>
            <person name="DePristo M."/>
            <person name="Do R."/>
            <person name="Flannick J."/>
            <person name="Fromer M."/>
            <person name="Gauthier L."/>
            <person name="Goldstein J."/>
            <person name="Gupta N."/>
            <person name="Howrigan D."/>
            <person name="Kiezun A."/>
            <person name="Kurki M.I."/>
            <person name="Moonshine A.L."/>
            <person name="Natarajan P."/>
            <person name="Orozco L."/>
            <person name="Peloso G.M."/>
            <person name="Poplin R."/>
            <person name="Rivas M.A."/>
            <person name="Ruano-Rubio V."/>
            <person name="Rose S.A."/>
            <person name="Ruderfer D.M."/>
            <person name="Shakir K."/>
            <person name="Stenson P.D."/>
            <person name="Stevens C."/>
            <person name="Thomas B.P."/>
            <person name="Tiao G."/>
            <person name="Tusie-Luna M.T."/>
            <person name="Weisburd B."/>
            <person name="Won H.H."/>
            <person name="Yu D."/>
            <person name="Altshuler D.M."/>
            <person name="Ardissino D."/>
            <person name="Boehnke M."/>
            <person name="Danesh J."/>
            <person name="Donnelly S."/>
            <person name="Elosua R."/>
            <person name="Florez J.C."/>
            <person name="Gabriel S.B."/>
            <person name="Getz G."/>
            <person name="Glatt S.J."/>
            <person name="Hultman C.M."/>
            <person name="Kathiresan S."/>
            <person name="Laakso M."/>
            <person name="McCarroll S."/>
            <person name="McCarthy M.I."/>
            <person name="McGovern D."/>
            <person name="McPherson R."/>
            <person name="Neale B.M."/>
            <person name="Palotie A."/>
            <person name="Purcell S.M."/>
            <person name="Saleheen D."/>
            <person name="Scharf J.M."/>
            <person name="Sklar P."/>
            <person name="Sullivan P.F."/>
            <person name="Tuomilehto J."/>
            <person name="Tsuang M.T."/>
            <person name="Watkins H.C."/>
            <person name="Wilson J.G."/>
            <person name="Daly M.J."/>
            <person name="MacArthur D.G."/>
        </authorList>
    </citation>
    <scope>VARIANT HIS-465</scope>
</reference>
<keyword id="KW-0067">ATP-binding</keyword>
<keyword id="KW-1003">Cell membrane</keyword>
<keyword id="KW-0209">Deafness</keyword>
<keyword id="KW-0225">Disease variant</keyword>
<keyword id="KW-0375">Hydrogen ion transport</keyword>
<keyword id="KW-0406">Ion transport</keyword>
<keyword id="KW-0472">Membrane</keyword>
<keyword id="KW-0547">Nucleotide-binding</keyword>
<keyword id="KW-1267">Proteomics identification</keyword>
<keyword id="KW-1185">Reference proteome</keyword>
<keyword id="KW-0813">Transport</keyword>